<evidence type="ECO:0000255" key="1">
    <source>
        <dbReference type="HAMAP-Rule" id="MF_01956"/>
    </source>
</evidence>
<sequence length="168" mass="18673">MVEDILAPGLRVVFCGINPGLSSAGTGFPFAHPANRFWKVIYQAGFTDRQLKPQEAQHLLDYRCGVTKLVDRPTVQANEVSKQELHAGGRKLIEKIEDYQPQALAILGKQAYEQGFSQRGAQWGKQTLTIGSTQIWVLPNPSGLSRVSLEKLVEAYRELDQALVVRGR</sequence>
<feature type="chain" id="PRO_1000188951" description="G/U mismatch-specific DNA glycosylase">
    <location>
        <begin position="1"/>
        <end position="168"/>
    </location>
</feature>
<name>MUG_ECO55</name>
<accession>B7LH04</accession>
<keyword id="KW-0963">Cytoplasm</keyword>
<keyword id="KW-0227">DNA damage</keyword>
<keyword id="KW-0228">DNA excision</keyword>
<keyword id="KW-0234">DNA repair</keyword>
<keyword id="KW-0238">DNA-binding</keyword>
<keyword id="KW-0378">Hydrolase</keyword>
<keyword id="KW-1185">Reference proteome</keyword>
<gene>
    <name evidence="1" type="primary">mug</name>
    <name type="ordered locus">EC55989_3483</name>
</gene>
<reference key="1">
    <citation type="journal article" date="2009" name="PLoS Genet.">
        <title>Organised genome dynamics in the Escherichia coli species results in highly diverse adaptive paths.</title>
        <authorList>
            <person name="Touchon M."/>
            <person name="Hoede C."/>
            <person name="Tenaillon O."/>
            <person name="Barbe V."/>
            <person name="Baeriswyl S."/>
            <person name="Bidet P."/>
            <person name="Bingen E."/>
            <person name="Bonacorsi S."/>
            <person name="Bouchier C."/>
            <person name="Bouvet O."/>
            <person name="Calteau A."/>
            <person name="Chiapello H."/>
            <person name="Clermont O."/>
            <person name="Cruveiller S."/>
            <person name="Danchin A."/>
            <person name="Diard M."/>
            <person name="Dossat C."/>
            <person name="Karoui M.E."/>
            <person name="Frapy E."/>
            <person name="Garry L."/>
            <person name="Ghigo J.M."/>
            <person name="Gilles A.M."/>
            <person name="Johnson J."/>
            <person name="Le Bouguenec C."/>
            <person name="Lescat M."/>
            <person name="Mangenot S."/>
            <person name="Martinez-Jehanne V."/>
            <person name="Matic I."/>
            <person name="Nassif X."/>
            <person name="Oztas S."/>
            <person name="Petit M.A."/>
            <person name="Pichon C."/>
            <person name="Rouy Z."/>
            <person name="Ruf C.S."/>
            <person name="Schneider D."/>
            <person name="Tourret J."/>
            <person name="Vacherie B."/>
            <person name="Vallenet D."/>
            <person name="Medigue C."/>
            <person name="Rocha E.P.C."/>
            <person name="Denamur E."/>
        </authorList>
    </citation>
    <scope>NUCLEOTIDE SEQUENCE [LARGE SCALE GENOMIC DNA]</scope>
    <source>
        <strain>55989 / EAEC</strain>
    </source>
</reference>
<organism>
    <name type="scientific">Escherichia coli (strain 55989 / EAEC)</name>
    <dbReference type="NCBI Taxonomy" id="585055"/>
    <lineage>
        <taxon>Bacteria</taxon>
        <taxon>Pseudomonadati</taxon>
        <taxon>Pseudomonadota</taxon>
        <taxon>Gammaproteobacteria</taxon>
        <taxon>Enterobacterales</taxon>
        <taxon>Enterobacteriaceae</taxon>
        <taxon>Escherichia</taxon>
    </lineage>
</organism>
<proteinExistence type="inferred from homology"/>
<dbReference type="EC" id="3.2.2.28" evidence="1"/>
<dbReference type="EMBL" id="CU928145">
    <property type="protein sequence ID" value="CAU99624.1"/>
    <property type="molecule type" value="Genomic_DNA"/>
</dbReference>
<dbReference type="RefSeq" id="WP_000228937.1">
    <property type="nucleotide sequence ID" value="NZ_CP028304.1"/>
</dbReference>
<dbReference type="SMR" id="B7LH04"/>
<dbReference type="GeneID" id="93778924"/>
<dbReference type="KEGG" id="eck:EC55989_3483"/>
<dbReference type="HOGENOM" id="CLU_042829_3_1_6"/>
<dbReference type="Proteomes" id="UP000000746">
    <property type="component" value="Chromosome"/>
</dbReference>
<dbReference type="GO" id="GO:0005737">
    <property type="term" value="C:cytoplasm"/>
    <property type="evidence" value="ECO:0007669"/>
    <property type="project" value="UniProtKB-SubCell"/>
</dbReference>
<dbReference type="GO" id="GO:0003677">
    <property type="term" value="F:DNA binding"/>
    <property type="evidence" value="ECO:0007669"/>
    <property type="project" value="UniProtKB-KW"/>
</dbReference>
<dbReference type="GO" id="GO:0008263">
    <property type="term" value="F:pyrimidine-specific mismatch base pair DNA N-glycosylase activity"/>
    <property type="evidence" value="ECO:0007669"/>
    <property type="project" value="UniProtKB-UniRule"/>
</dbReference>
<dbReference type="GO" id="GO:0004844">
    <property type="term" value="F:uracil DNA N-glycosylase activity"/>
    <property type="evidence" value="ECO:0007669"/>
    <property type="project" value="TreeGrafter"/>
</dbReference>
<dbReference type="GO" id="GO:0006285">
    <property type="term" value="P:base-excision repair, AP site formation"/>
    <property type="evidence" value="ECO:0007669"/>
    <property type="project" value="UniProtKB-UniRule"/>
</dbReference>
<dbReference type="CDD" id="cd10028">
    <property type="entry name" value="UDG-F2_TDG_MUG"/>
    <property type="match status" value="1"/>
</dbReference>
<dbReference type="FunFam" id="3.40.470.10:FF:000003">
    <property type="entry name" value="G/U mismatch-specific DNA glycosylase"/>
    <property type="match status" value="1"/>
</dbReference>
<dbReference type="Gene3D" id="3.40.470.10">
    <property type="entry name" value="Uracil-DNA glycosylase-like domain"/>
    <property type="match status" value="1"/>
</dbReference>
<dbReference type="HAMAP" id="MF_01956">
    <property type="entry name" value="MUG"/>
    <property type="match status" value="1"/>
</dbReference>
<dbReference type="InterPro" id="IPR015637">
    <property type="entry name" value="MUG/TDG"/>
</dbReference>
<dbReference type="InterPro" id="IPR023502">
    <property type="entry name" value="MUG_bact"/>
</dbReference>
<dbReference type="InterPro" id="IPR005122">
    <property type="entry name" value="Uracil-DNA_glycosylase-like"/>
</dbReference>
<dbReference type="InterPro" id="IPR036895">
    <property type="entry name" value="Uracil-DNA_glycosylase-like_sf"/>
</dbReference>
<dbReference type="NCBIfam" id="NF007570">
    <property type="entry name" value="PRK10201.1"/>
    <property type="match status" value="1"/>
</dbReference>
<dbReference type="PANTHER" id="PTHR12159">
    <property type="entry name" value="G/T AND G/U MISMATCH-SPECIFIC DNA GLYCOSYLASE"/>
    <property type="match status" value="1"/>
</dbReference>
<dbReference type="PANTHER" id="PTHR12159:SF9">
    <property type="entry name" value="G_T MISMATCH-SPECIFIC THYMINE DNA GLYCOSYLASE"/>
    <property type="match status" value="1"/>
</dbReference>
<dbReference type="Pfam" id="PF03167">
    <property type="entry name" value="UDG"/>
    <property type="match status" value="1"/>
</dbReference>
<dbReference type="SUPFAM" id="SSF52141">
    <property type="entry name" value="Uracil-DNA glycosylase-like"/>
    <property type="match status" value="1"/>
</dbReference>
<comment type="function">
    <text evidence="1">Excises ethenocytosine and uracil, which can arise by alkylation or deamination of cytosine, respectively, from the corresponding mispairs with guanine in ds-DNA. It is capable of hydrolyzing the carbon-nitrogen bond between the sugar-phosphate backbone of the DNA and the mispaired base. The complementary strand guanine functions in substrate recognition. Required for DNA damage lesion repair in stationary-phase cells.</text>
</comment>
<comment type="catalytic activity">
    <reaction evidence="1">
        <text>Specifically hydrolyzes mismatched double-stranded DNA and polynucleotides, releasing free uracil.</text>
        <dbReference type="EC" id="3.2.2.28"/>
    </reaction>
</comment>
<comment type="subunit">
    <text evidence="1">Binds DNA as a monomer.</text>
</comment>
<comment type="subcellular location">
    <subcellularLocation>
        <location evidence="1">Cytoplasm</location>
    </subcellularLocation>
</comment>
<comment type="similarity">
    <text evidence="1">Belongs to the uracil-DNA glycosylase (UDG) superfamily. TDG/mug family.</text>
</comment>
<protein>
    <recommendedName>
        <fullName evidence="1">G/U mismatch-specific DNA glycosylase</fullName>
        <ecNumber evidence="1">3.2.2.28</ecNumber>
    </recommendedName>
    <alternativeName>
        <fullName evidence="1">Double-strand-specific uracil glycosylase</fullName>
    </alternativeName>
    <alternativeName>
        <fullName evidence="1">Mismatch-specific uracil DNA-glycosylase</fullName>
        <shortName evidence="1">MUG</shortName>
    </alternativeName>
</protein>